<gene>
    <name evidence="5" type="primary">NEK1</name>
    <name evidence="10" type="ordered locus">Os03g0636800</name>
    <name evidence="9" type="ordered locus">LOC_Os03g43590</name>
    <name evidence="11" type="ORF">OsJ_11838</name>
    <name evidence="8" type="ORF">OSJNBa0066H15.19</name>
</gene>
<keyword id="KW-0067">ATP-binding</keyword>
<keyword id="KW-0418">Kinase</keyword>
<keyword id="KW-0547">Nucleotide-binding</keyword>
<keyword id="KW-1185">Reference proteome</keyword>
<keyword id="KW-0723">Serine/threonine-protein kinase</keyword>
<keyword id="KW-0808">Transferase</keyword>
<reference key="1">
    <citation type="journal article" date="2005" name="Genome Res.">
        <title>Sequence, annotation, and analysis of synteny between rice chromosome 3 and diverged grass species.</title>
        <authorList>
            <consortium name="The rice chromosome 3 sequencing consortium"/>
            <person name="Buell C.R."/>
            <person name="Yuan Q."/>
            <person name="Ouyang S."/>
            <person name="Liu J."/>
            <person name="Zhu W."/>
            <person name="Wang A."/>
            <person name="Maiti R."/>
            <person name="Haas B."/>
            <person name="Wortman J."/>
            <person name="Pertea M."/>
            <person name="Jones K.M."/>
            <person name="Kim M."/>
            <person name="Overton L."/>
            <person name="Tsitrin T."/>
            <person name="Fadrosh D."/>
            <person name="Bera J."/>
            <person name="Weaver B."/>
            <person name="Jin S."/>
            <person name="Johri S."/>
            <person name="Reardon M."/>
            <person name="Webb K."/>
            <person name="Hill J."/>
            <person name="Moffat K."/>
            <person name="Tallon L."/>
            <person name="Van Aken S."/>
            <person name="Lewis M."/>
            <person name="Utterback T."/>
            <person name="Feldblyum T."/>
            <person name="Zismann V."/>
            <person name="Iobst S."/>
            <person name="Hsiao J."/>
            <person name="de Vazeille A.R."/>
            <person name="Salzberg S.L."/>
            <person name="White O."/>
            <person name="Fraser C.M."/>
            <person name="Yu Y."/>
            <person name="Kim H."/>
            <person name="Rambo T."/>
            <person name="Currie J."/>
            <person name="Collura K."/>
            <person name="Kernodle-Thompson S."/>
            <person name="Wei F."/>
            <person name="Kudrna K."/>
            <person name="Ammiraju J.S.S."/>
            <person name="Luo M."/>
            <person name="Goicoechea J.L."/>
            <person name="Wing R.A."/>
            <person name="Henry D."/>
            <person name="Oates R."/>
            <person name="Palmer M."/>
            <person name="Pries G."/>
            <person name="Saski C."/>
            <person name="Simmons J."/>
            <person name="Soderlund C."/>
            <person name="Nelson W."/>
            <person name="de la Bastide M."/>
            <person name="Spiegel L."/>
            <person name="Nascimento L."/>
            <person name="Huang E."/>
            <person name="Preston R."/>
            <person name="Zutavern T."/>
            <person name="Palmer L."/>
            <person name="O'Shaughnessy A."/>
            <person name="Dike S."/>
            <person name="McCombie W.R."/>
            <person name="Minx P."/>
            <person name="Cordum H."/>
            <person name="Wilson R."/>
            <person name="Jin W."/>
            <person name="Lee H.R."/>
            <person name="Jiang J."/>
            <person name="Jackson S."/>
        </authorList>
    </citation>
    <scope>NUCLEOTIDE SEQUENCE [LARGE SCALE GENOMIC DNA]</scope>
    <source>
        <strain>cv. Nipponbare</strain>
    </source>
</reference>
<reference key="2">
    <citation type="journal article" date="2005" name="Nature">
        <title>The map-based sequence of the rice genome.</title>
        <authorList>
            <consortium name="International rice genome sequencing project (IRGSP)"/>
        </authorList>
    </citation>
    <scope>NUCLEOTIDE SEQUENCE [LARGE SCALE GENOMIC DNA]</scope>
    <source>
        <strain>cv. Nipponbare</strain>
    </source>
</reference>
<reference key="3">
    <citation type="journal article" date="2008" name="Nucleic Acids Res.">
        <title>The rice annotation project database (RAP-DB): 2008 update.</title>
        <authorList>
            <consortium name="The rice annotation project (RAP)"/>
        </authorList>
    </citation>
    <scope>GENOME REANNOTATION</scope>
    <source>
        <strain>cv. Nipponbare</strain>
    </source>
</reference>
<reference key="4">
    <citation type="journal article" date="2013" name="Rice">
        <title>Improvement of the Oryza sativa Nipponbare reference genome using next generation sequence and optical map data.</title>
        <authorList>
            <person name="Kawahara Y."/>
            <person name="de la Bastide M."/>
            <person name="Hamilton J.P."/>
            <person name="Kanamori H."/>
            <person name="McCombie W.R."/>
            <person name="Ouyang S."/>
            <person name="Schwartz D.C."/>
            <person name="Tanaka T."/>
            <person name="Wu J."/>
            <person name="Zhou S."/>
            <person name="Childs K.L."/>
            <person name="Davidson R.M."/>
            <person name="Lin H."/>
            <person name="Quesada-Ocampo L."/>
            <person name="Vaillancourt B."/>
            <person name="Sakai H."/>
            <person name="Lee S.S."/>
            <person name="Kim J."/>
            <person name="Numa H."/>
            <person name="Itoh T."/>
            <person name="Buell C.R."/>
            <person name="Matsumoto T."/>
        </authorList>
    </citation>
    <scope>GENOME REANNOTATION</scope>
    <source>
        <strain>cv. Nipponbare</strain>
    </source>
</reference>
<reference key="5">
    <citation type="journal article" date="2005" name="PLoS Biol.">
        <title>The genomes of Oryza sativa: a history of duplications.</title>
        <authorList>
            <person name="Yu J."/>
            <person name="Wang J."/>
            <person name="Lin W."/>
            <person name="Li S."/>
            <person name="Li H."/>
            <person name="Zhou J."/>
            <person name="Ni P."/>
            <person name="Dong W."/>
            <person name="Hu S."/>
            <person name="Zeng C."/>
            <person name="Zhang J."/>
            <person name="Zhang Y."/>
            <person name="Li R."/>
            <person name="Xu Z."/>
            <person name="Li S."/>
            <person name="Li X."/>
            <person name="Zheng H."/>
            <person name="Cong L."/>
            <person name="Lin L."/>
            <person name="Yin J."/>
            <person name="Geng J."/>
            <person name="Li G."/>
            <person name="Shi J."/>
            <person name="Liu J."/>
            <person name="Lv H."/>
            <person name="Li J."/>
            <person name="Wang J."/>
            <person name="Deng Y."/>
            <person name="Ran L."/>
            <person name="Shi X."/>
            <person name="Wang X."/>
            <person name="Wu Q."/>
            <person name="Li C."/>
            <person name="Ren X."/>
            <person name="Wang J."/>
            <person name="Wang X."/>
            <person name="Li D."/>
            <person name="Liu D."/>
            <person name="Zhang X."/>
            <person name="Ji Z."/>
            <person name="Zhao W."/>
            <person name="Sun Y."/>
            <person name="Zhang Z."/>
            <person name="Bao J."/>
            <person name="Han Y."/>
            <person name="Dong L."/>
            <person name="Ji J."/>
            <person name="Chen P."/>
            <person name="Wu S."/>
            <person name="Liu J."/>
            <person name="Xiao Y."/>
            <person name="Bu D."/>
            <person name="Tan J."/>
            <person name="Yang L."/>
            <person name="Ye C."/>
            <person name="Zhang J."/>
            <person name="Xu J."/>
            <person name="Zhou Y."/>
            <person name="Yu Y."/>
            <person name="Zhang B."/>
            <person name="Zhuang S."/>
            <person name="Wei H."/>
            <person name="Liu B."/>
            <person name="Lei M."/>
            <person name="Yu H."/>
            <person name="Li Y."/>
            <person name="Xu H."/>
            <person name="Wei S."/>
            <person name="He X."/>
            <person name="Fang L."/>
            <person name="Zhang Z."/>
            <person name="Zhang Y."/>
            <person name="Huang X."/>
            <person name="Su Z."/>
            <person name="Tong W."/>
            <person name="Li J."/>
            <person name="Tong Z."/>
            <person name="Li S."/>
            <person name="Ye J."/>
            <person name="Wang L."/>
            <person name="Fang L."/>
            <person name="Lei T."/>
            <person name="Chen C.-S."/>
            <person name="Chen H.-C."/>
            <person name="Xu Z."/>
            <person name="Li H."/>
            <person name="Huang H."/>
            <person name="Zhang F."/>
            <person name="Xu H."/>
            <person name="Li N."/>
            <person name="Zhao C."/>
            <person name="Li S."/>
            <person name="Dong L."/>
            <person name="Huang Y."/>
            <person name="Li L."/>
            <person name="Xi Y."/>
            <person name="Qi Q."/>
            <person name="Li W."/>
            <person name="Zhang B."/>
            <person name="Hu W."/>
            <person name="Zhang Y."/>
            <person name="Tian X."/>
            <person name="Jiao Y."/>
            <person name="Liang X."/>
            <person name="Jin J."/>
            <person name="Gao L."/>
            <person name="Zheng W."/>
            <person name="Hao B."/>
            <person name="Liu S.-M."/>
            <person name="Wang W."/>
            <person name="Yuan L."/>
            <person name="Cao M."/>
            <person name="McDermott J."/>
            <person name="Samudrala R."/>
            <person name="Wang J."/>
            <person name="Wong G.K.-S."/>
            <person name="Yang H."/>
        </authorList>
    </citation>
    <scope>NUCLEOTIDE SEQUENCE [LARGE SCALE GENOMIC DNA]</scope>
    <source>
        <strain>cv. Nipponbare</strain>
    </source>
</reference>
<reference key="6">
    <citation type="journal article" date="2003" name="Science">
        <title>Collection, mapping, and annotation of over 28,000 cDNA clones from japonica rice.</title>
        <authorList>
            <consortium name="The rice full-length cDNA consortium"/>
        </authorList>
    </citation>
    <scope>NUCLEOTIDE SEQUENCE [LARGE SCALE MRNA]</scope>
    <source>
        <strain>cv. Nipponbare</strain>
    </source>
</reference>
<reference key="7">
    <citation type="journal article" date="2007" name="Plant J.">
        <title>Members of the plant NIMA-related kinases are involved in organ development and vascularization in poplar, Arabidopsis and rice.</title>
        <authorList>
            <person name="Vigneault F."/>
            <person name="Lachance D."/>
            <person name="Cloutier M."/>
            <person name="Pelletier G."/>
            <person name="Levasseur C."/>
            <person name="Seguin A."/>
        </authorList>
    </citation>
    <scope>FUNCTION</scope>
    <scope>GENE FAMILY</scope>
    <scope>NOMENCLATURE</scope>
</reference>
<reference key="8">
    <citation type="journal article" date="2009" name="Plant Cell Physiol.">
        <title>Cytoplasmic male sterility-related protein kinase, OsNek3, is regulated downstream of mitochondrial protein phosphatase 2C, DCW11.</title>
        <authorList>
            <person name="Fujii S."/>
            <person name="Yamada M."/>
            <person name="Toriyama K."/>
        </authorList>
    </citation>
    <scope>TISSUE SPECIFICITY</scope>
</reference>
<evidence type="ECO:0000255" key="1">
    <source>
        <dbReference type="PROSITE-ProRule" id="PRU00159"/>
    </source>
</evidence>
<evidence type="ECO:0000255" key="2">
    <source>
        <dbReference type="PROSITE-ProRule" id="PRU10027"/>
    </source>
</evidence>
<evidence type="ECO:0000256" key="3">
    <source>
        <dbReference type="SAM" id="MobiDB-lite"/>
    </source>
</evidence>
<evidence type="ECO:0000269" key="4">
    <source>
    </source>
</evidence>
<evidence type="ECO:0000303" key="5">
    <source>
    </source>
</evidence>
<evidence type="ECO:0000305" key="6"/>
<evidence type="ECO:0000305" key="7">
    <source>
    </source>
</evidence>
<evidence type="ECO:0000312" key="8">
    <source>
        <dbReference type="EMBL" id="AAR01739.1"/>
    </source>
</evidence>
<evidence type="ECO:0000312" key="9">
    <source>
        <dbReference type="EMBL" id="ABF97791.1"/>
    </source>
</evidence>
<evidence type="ECO:0000312" key="10">
    <source>
        <dbReference type="EMBL" id="BAS85395.1"/>
    </source>
</evidence>
<evidence type="ECO:0000312" key="11">
    <source>
        <dbReference type="EMBL" id="EEE59555.1"/>
    </source>
</evidence>
<dbReference type="EC" id="2.7.11.1" evidence="6"/>
<dbReference type="EMBL" id="AC120505">
    <property type="protein sequence ID" value="AAR01739.1"/>
    <property type="status" value="ALT_SEQ"/>
    <property type="molecule type" value="Genomic_DNA"/>
</dbReference>
<dbReference type="EMBL" id="DP000009">
    <property type="protein sequence ID" value="ABF97791.1"/>
    <property type="molecule type" value="Genomic_DNA"/>
</dbReference>
<dbReference type="EMBL" id="AP008209">
    <property type="protein sequence ID" value="BAF12638.2"/>
    <property type="status" value="ALT_SEQ"/>
    <property type="molecule type" value="Genomic_DNA"/>
</dbReference>
<dbReference type="EMBL" id="AP014959">
    <property type="protein sequence ID" value="BAS85395.1"/>
    <property type="molecule type" value="Genomic_DNA"/>
</dbReference>
<dbReference type="EMBL" id="CM000140">
    <property type="protein sequence ID" value="EEE59555.1"/>
    <property type="molecule type" value="Genomic_DNA"/>
</dbReference>
<dbReference type="EMBL" id="AK073903">
    <property type="protein sequence ID" value="BAG93703.1"/>
    <property type="molecule type" value="mRNA"/>
</dbReference>
<dbReference type="RefSeq" id="XP_015628957.1">
    <property type="nucleotide sequence ID" value="XM_015773471.1"/>
</dbReference>
<dbReference type="RefSeq" id="XP_015628958.1">
    <property type="nucleotide sequence ID" value="XM_015773472.1"/>
</dbReference>
<dbReference type="SMR" id="Q10GB1"/>
<dbReference type="FunCoup" id="Q10GB1">
    <property type="interactions" value="947"/>
</dbReference>
<dbReference type="STRING" id="39947.Q10GB1"/>
<dbReference type="PaxDb" id="39947-Q10GB1"/>
<dbReference type="EnsemblPlants" id="Os03t0636800-01">
    <property type="protein sequence ID" value="Os03t0636800-01"/>
    <property type="gene ID" value="Os03g0636800"/>
</dbReference>
<dbReference type="Gramene" id="Os03t0636800-01">
    <property type="protein sequence ID" value="Os03t0636800-01"/>
    <property type="gene ID" value="Os03g0636800"/>
</dbReference>
<dbReference type="KEGG" id="dosa:Os03g0636800"/>
<dbReference type="eggNOG" id="KOG0589">
    <property type="taxonomic scope" value="Eukaryota"/>
</dbReference>
<dbReference type="HOGENOM" id="CLU_000288_128_3_1"/>
<dbReference type="InParanoid" id="Q10GB1"/>
<dbReference type="OMA" id="PTHFEMV"/>
<dbReference type="OrthoDB" id="248923at2759"/>
<dbReference type="Proteomes" id="UP000000763">
    <property type="component" value="Chromosome 3"/>
</dbReference>
<dbReference type="Proteomes" id="UP000007752">
    <property type="component" value="Chromosome 3"/>
</dbReference>
<dbReference type="Proteomes" id="UP000059680">
    <property type="component" value="Chromosome 3"/>
</dbReference>
<dbReference type="ExpressionAtlas" id="Q10GB1">
    <property type="expression patterns" value="baseline and differential"/>
</dbReference>
<dbReference type="GO" id="GO:0005524">
    <property type="term" value="F:ATP binding"/>
    <property type="evidence" value="ECO:0007669"/>
    <property type="project" value="UniProtKB-KW"/>
</dbReference>
<dbReference type="GO" id="GO:0106310">
    <property type="term" value="F:protein serine kinase activity"/>
    <property type="evidence" value="ECO:0007669"/>
    <property type="project" value="RHEA"/>
</dbReference>
<dbReference type="GO" id="GO:0004674">
    <property type="term" value="F:protein serine/threonine kinase activity"/>
    <property type="evidence" value="ECO:0000318"/>
    <property type="project" value="GO_Central"/>
</dbReference>
<dbReference type="CDD" id="cd08215">
    <property type="entry name" value="STKc_Nek"/>
    <property type="match status" value="1"/>
</dbReference>
<dbReference type="FunFam" id="1.10.510.10:FF:001795">
    <property type="entry name" value="Serine/threonine-protein kinase Nek1"/>
    <property type="match status" value="1"/>
</dbReference>
<dbReference type="FunFam" id="3.30.200.20:FF:000108">
    <property type="entry name" value="Serine/threonine-protein kinase Nek2"/>
    <property type="match status" value="1"/>
</dbReference>
<dbReference type="Gene3D" id="3.30.200.20">
    <property type="entry name" value="Phosphorylase Kinase, domain 1"/>
    <property type="match status" value="1"/>
</dbReference>
<dbReference type="Gene3D" id="1.10.510.10">
    <property type="entry name" value="Transferase(Phosphotransferase) domain 1"/>
    <property type="match status" value="1"/>
</dbReference>
<dbReference type="InterPro" id="IPR011009">
    <property type="entry name" value="Kinase-like_dom_sf"/>
</dbReference>
<dbReference type="InterPro" id="IPR050660">
    <property type="entry name" value="NEK_Ser/Thr_kinase"/>
</dbReference>
<dbReference type="InterPro" id="IPR000719">
    <property type="entry name" value="Prot_kinase_dom"/>
</dbReference>
<dbReference type="InterPro" id="IPR017441">
    <property type="entry name" value="Protein_kinase_ATP_BS"/>
</dbReference>
<dbReference type="InterPro" id="IPR008271">
    <property type="entry name" value="Ser/Thr_kinase_AS"/>
</dbReference>
<dbReference type="PANTHER" id="PTHR43671">
    <property type="entry name" value="SERINE/THREONINE-PROTEIN KINASE NEK"/>
    <property type="match status" value="1"/>
</dbReference>
<dbReference type="PANTHER" id="PTHR43671:SF87">
    <property type="entry name" value="SERINE_THREONINE-PROTEIN KINASE NEK1"/>
    <property type="match status" value="1"/>
</dbReference>
<dbReference type="Pfam" id="PF00069">
    <property type="entry name" value="Pkinase"/>
    <property type="match status" value="1"/>
</dbReference>
<dbReference type="SMART" id="SM00220">
    <property type="entry name" value="S_TKc"/>
    <property type="match status" value="1"/>
</dbReference>
<dbReference type="SUPFAM" id="SSF56112">
    <property type="entry name" value="Protein kinase-like (PK-like)"/>
    <property type="match status" value="1"/>
</dbReference>
<dbReference type="PROSITE" id="PS00107">
    <property type="entry name" value="PROTEIN_KINASE_ATP"/>
    <property type="match status" value="1"/>
</dbReference>
<dbReference type="PROSITE" id="PS50011">
    <property type="entry name" value="PROTEIN_KINASE_DOM"/>
    <property type="match status" value="1"/>
</dbReference>
<dbReference type="PROSITE" id="PS00108">
    <property type="entry name" value="PROTEIN_KINASE_ST"/>
    <property type="match status" value="1"/>
</dbReference>
<accession>Q10GB1</accession>
<accession>B7EMV6</accession>
<accession>Q75J31</accession>
<sequence>MEQYEVLEQIGKGAFGSALLVRHKVEKKKYVLKKIRLARQTDRTRRSAHQEMQLIATVRNPFIVEYKDSWVEKGCYVCIIIGYCEGGDMAEAIKRATGDHFSEEKLCKWLVQLLMALDYLHANHILHRDVKCSNIFLTRDQSIRLGDFGLAKILTSDDLASSVVGTPSYMCPELLADIPYGTKSDIWSLGCCIYEMTALRPAFKAFDMQALISKITKSIVSPLPTRYSGAFRGLIKSMLRKSPEHRPSAAELLKHPHLQPYVLQVHLKSSPARNIIPSHQSPIDKVKKMTFPTESMCRSKGRRNSLGNERIVTFSKPSPERKFTSSIQSIKDYSTTRSVKDLSIDVSLVEEVSSKTTFTTRTSSIVKTPKRTPSKTITTPQLEPPKVSYNRVNRSELLSRTPVNRSARVIRRASLPLPLPSSETPKRGVSSISILEQLESPDVSVNSPRIDRIAEFPLASSEDPPFLKLHGRRSPTPTPQHCVIDQSITKDKCMVEAFHIIDVDDDDGRSDSSSGRNNAAAAASSRAGSSESTRQRRFDTSSYQQRAEALEGLLEFSAQLLQQERYDELGVLLKPFGPEKVSPRETAIWLTKSFKETGL</sequence>
<proteinExistence type="evidence at transcript level"/>
<feature type="chain" id="PRO_0000314044" description="Serine/threonine-protein kinase Nek1">
    <location>
        <begin position="1"/>
        <end position="599"/>
    </location>
</feature>
<feature type="domain" description="Protein kinase" evidence="1">
    <location>
        <begin position="4"/>
        <end position="258"/>
    </location>
</feature>
<feature type="region of interest" description="Disordered" evidence="3">
    <location>
        <begin position="364"/>
        <end position="386"/>
    </location>
</feature>
<feature type="region of interest" description="Disordered" evidence="3">
    <location>
        <begin position="461"/>
        <end position="482"/>
    </location>
</feature>
<feature type="region of interest" description="Disordered" evidence="3">
    <location>
        <begin position="504"/>
        <end position="542"/>
    </location>
</feature>
<feature type="compositionally biased region" description="Low complexity" evidence="3">
    <location>
        <begin position="511"/>
        <end position="530"/>
    </location>
</feature>
<feature type="active site" description="Proton acceptor" evidence="1 2">
    <location>
        <position position="129"/>
    </location>
</feature>
<feature type="binding site" evidence="1">
    <location>
        <begin position="10"/>
        <end position="18"/>
    </location>
    <ligand>
        <name>ATP</name>
        <dbReference type="ChEBI" id="CHEBI:30616"/>
    </ligand>
</feature>
<feature type="binding site" evidence="1">
    <location>
        <position position="33"/>
    </location>
    <ligand>
        <name>ATP</name>
        <dbReference type="ChEBI" id="CHEBI:30616"/>
    </ligand>
</feature>
<organism>
    <name type="scientific">Oryza sativa subsp. japonica</name>
    <name type="common">Rice</name>
    <dbReference type="NCBI Taxonomy" id="39947"/>
    <lineage>
        <taxon>Eukaryota</taxon>
        <taxon>Viridiplantae</taxon>
        <taxon>Streptophyta</taxon>
        <taxon>Embryophyta</taxon>
        <taxon>Tracheophyta</taxon>
        <taxon>Spermatophyta</taxon>
        <taxon>Magnoliopsida</taxon>
        <taxon>Liliopsida</taxon>
        <taxon>Poales</taxon>
        <taxon>Poaceae</taxon>
        <taxon>BOP clade</taxon>
        <taxon>Oryzoideae</taxon>
        <taxon>Oryzeae</taxon>
        <taxon>Oryzinae</taxon>
        <taxon>Oryza</taxon>
        <taxon>Oryza sativa</taxon>
    </lineage>
</organism>
<protein>
    <recommendedName>
        <fullName evidence="6">Serine/threonine-protein kinase Nek1</fullName>
        <ecNumber evidence="6">2.7.11.1</ecNumber>
    </recommendedName>
    <alternativeName>
        <fullName evidence="5">NimA-related protein kinase 1</fullName>
    </alternativeName>
    <alternativeName>
        <fullName evidence="5">OsNek1</fullName>
    </alternativeName>
</protein>
<comment type="function">
    <text evidence="7">May be involved in plant development processes.</text>
</comment>
<comment type="catalytic activity">
    <reaction evidence="6">
        <text>L-seryl-[protein] + ATP = O-phospho-L-seryl-[protein] + ADP + H(+)</text>
        <dbReference type="Rhea" id="RHEA:17989"/>
        <dbReference type="Rhea" id="RHEA-COMP:9863"/>
        <dbReference type="Rhea" id="RHEA-COMP:11604"/>
        <dbReference type="ChEBI" id="CHEBI:15378"/>
        <dbReference type="ChEBI" id="CHEBI:29999"/>
        <dbReference type="ChEBI" id="CHEBI:30616"/>
        <dbReference type="ChEBI" id="CHEBI:83421"/>
        <dbReference type="ChEBI" id="CHEBI:456216"/>
        <dbReference type="EC" id="2.7.11.1"/>
    </reaction>
</comment>
<comment type="catalytic activity">
    <reaction evidence="6">
        <text>L-threonyl-[protein] + ATP = O-phospho-L-threonyl-[protein] + ADP + H(+)</text>
        <dbReference type="Rhea" id="RHEA:46608"/>
        <dbReference type="Rhea" id="RHEA-COMP:11060"/>
        <dbReference type="Rhea" id="RHEA-COMP:11605"/>
        <dbReference type="ChEBI" id="CHEBI:15378"/>
        <dbReference type="ChEBI" id="CHEBI:30013"/>
        <dbReference type="ChEBI" id="CHEBI:30616"/>
        <dbReference type="ChEBI" id="CHEBI:61977"/>
        <dbReference type="ChEBI" id="CHEBI:456216"/>
        <dbReference type="EC" id="2.7.11.1"/>
    </reaction>
</comment>
<comment type="tissue specificity">
    <text evidence="4">Expressed in anthers, pistils and leaves.</text>
</comment>
<comment type="similarity">
    <text evidence="6">Belongs to the protein kinase superfamily. NEK Ser/Thr protein kinase family. NIMA subfamily.</text>
</comment>
<comment type="sequence caution" evidence="6">
    <conflict type="erroneous gene model prediction">
        <sequence resource="EMBL-CDS" id="AAR01739"/>
    </conflict>
</comment>
<comment type="sequence caution" evidence="6">
    <conflict type="erroneous gene model prediction">
        <sequence resource="EMBL-CDS" id="BAF12638"/>
    </conflict>
</comment>
<name>NEK1_ORYSJ</name>